<organism>
    <name type="scientific">Nicotiana benthamiana</name>
    <dbReference type="NCBI Taxonomy" id="4100"/>
    <lineage>
        <taxon>Eukaryota</taxon>
        <taxon>Viridiplantae</taxon>
        <taxon>Streptophyta</taxon>
        <taxon>Embryophyta</taxon>
        <taxon>Tracheophyta</taxon>
        <taxon>Spermatophyta</taxon>
        <taxon>Magnoliopsida</taxon>
        <taxon>eudicotyledons</taxon>
        <taxon>Gunneridae</taxon>
        <taxon>Pentapetalae</taxon>
        <taxon>asterids</taxon>
        <taxon>lamiids</taxon>
        <taxon>Solanales</taxon>
        <taxon>Solanaceae</taxon>
        <taxon>Nicotianoideae</taxon>
        <taxon>Nicotianeae</taxon>
        <taxon>Nicotiana</taxon>
    </lineage>
</organism>
<feature type="transit peptide" description="Chloroplast" evidence="3">
    <location>
        <begin position="1"/>
        <end position="70"/>
    </location>
</feature>
<feature type="chain" id="PRO_0000430872" description="Thioredoxin-like protein CITRX2, chloroplastic" evidence="3">
    <location>
        <begin position="71"/>
        <end position="181"/>
    </location>
</feature>
<feature type="domain" description="Thioredoxin" evidence="4">
    <location>
        <begin position="72"/>
        <end position="181"/>
    </location>
</feature>
<feature type="active site" description="Nucleophile" evidence="1">
    <location>
        <position position="104"/>
    </location>
</feature>
<feature type="active site" description="Nucleophile" evidence="1">
    <location>
        <position position="107"/>
    </location>
</feature>
<feature type="site" description="Deprotonates C-terminal active site Cys" evidence="1">
    <location>
        <position position="98"/>
    </location>
</feature>
<feature type="site" description="Contributes to redox potential value" evidence="1">
    <location>
        <position position="105"/>
    </location>
</feature>
<feature type="site" description="Contributes to redox potential value" evidence="1">
    <location>
        <position position="106"/>
    </location>
</feature>
<feature type="disulfide bond" description="Redox-active" evidence="4">
    <location>
        <begin position="104"/>
        <end position="107"/>
    </location>
</feature>
<name>CITX2_NICBE</name>
<sequence length="181" mass="20560">MQAATLSFQPSAPPLQTSAFHFSSKQPNQLKYSLFSYTCPILKRSLLSTQTLSRKSICKPPDVATGKYVREDYLVKKVSAKDIQELIKGERNVPLIIDFYATWCGPCILMAQELEMLAVEYESNALIVKVDTDDEYEFARDMQVRGLPTLYFISPDPNKDAIRTEGLIPIQMMRDIINNDL</sequence>
<proteinExistence type="evidence at protein level"/>
<keyword id="KW-0150">Chloroplast</keyword>
<keyword id="KW-1015">Disulfide bond</keyword>
<keyword id="KW-0249">Electron transport</keyword>
<keyword id="KW-0560">Oxidoreductase</keyword>
<keyword id="KW-0934">Plastid</keyword>
<keyword id="KW-0676">Redox-active center</keyword>
<keyword id="KW-0809">Transit peptide</keyword>
<keyword id="KW-0813">Transport</keyword>
<reference key="1">
    <citation type="journal article" date="2004" name="EMBO J.">
        <title>CITRX thioredoxin interacts with the tomato Cf-9 resistance protein and negatively regulates defence.</title>
        <authorList>
            <person name="Rivas S."/>
            <person name="Rougon-Cardoso A."/>
            <person name="Smoker M."/>
            <person name="Schauser L."/>
            <person name="Yoshioka H."/>
            <person name="Jones J.D."/>
        </authorList>
    </citation>
    <scope>NUCLEOTIDE SEQUENCE [MRNA]</scope>
    <scope>RETRACTED PAPER</scope>
</reference>
<reference key="2">
    <citation type="journal article" date="2019" name="EMBO J.">
        <authorList>
            <person name="Rivas S."/>
            <person name="Rougon-Cardoso A."/>
            <person name="Smoker M."/>
            <person name="Schauser L."/>
            <person name="Yoshioka H."/>
            <person name="Jones J.D."/>
        </authorList>
    </citation>
    <scope>RETRACTION NOTICE OF PUBMED:15131698</scope>
</reference>
<dbReference type="EC" id="1.8.-.-" evidence="6"/>
<dbReference type="EMBL" id="AY500243">
    <property type="protein sequence ID" value="AAS80320.1"/>
    <property type="molecule type" value="mRNA"/>
</dbReference>
<dbReference type="SMR" id="Q6JE37"/>
<dbReference type="IntAct" id="Q6JE37">
    <property type="interactions" value="3"/>
</dbReference>
<dbReference type="MINT" id="Q6JE37"/>
<dbReference type="GO" id="GO:0009507">
    <property type="term" value="C:chloroplast"/>
    <property type="evidence" value="ECO:0007669"/>
    <property type="project" value="UniProtKB-SubCell"/>
</dbReference>
<dbReference type="GO" id="GO:0009579">
    <property type="term" value="C:thylakoid"/>
    <property type="evidence" value="ECO:0007669"/>
    <property type="project" value="TreeGrafter"/>
</dbReference>
<dbReference type="GO" id="GO:0015035">
    <property type="term" value="F:protein-disulfide reductase activity"/>
    <property type="evidence" value="ECO:0007669"/>
    <property type="project" value="InterPro"/>
</dbReference>
<dbReference type="GO" id="GO:0045454">
    <property type="term" value="P:cell redox homeostasis"/>
    <property type="evidence" value="ECO:0007669"/>
    <property type="project" value="InterPro"/>
</dbReference>
<dbReference type="GO" id="GO:0009657">
    <property type="term" value="P:plastid organization"/>
    <property type="evidence" value="ECO:0007669"/>
    <property type="project" value="TreeGrafter"/>
</dbReference>
<dbReference type="CDD" id="cd02947">
    <property type="entry name" value="TRX_family"/>
    <property type="match status" value="1"/>
</dbReference>
<dbReference type="FunFam" id="3.40.30.10:FF:000149">
    <property type="entry name" value="Thioredoxin-like protein CITRX, chloroplastic"/>
    <property type="match status" value="1"/>
</dbReference>
<dbReference type="Gene3D" id="3.40.30.10">
    <property type="entry name" value="Glutaredoxin"/>
    <property type="match status" value="1"/>
</dbReference>
<dbReference type="InterPro" id="IPR044182">
    <property type="entry name" value="CITRX"/>
</dbReference>
<dbReference type="InterPro" id="IPR036249">
    <property type="entry name" value="Thioredoxin-like_sf"/>
</dbReference>
<dbReference type="InterPro" id="IPR013766">
    <property type="entry name" value="Thioredoxin_domain"/>
</dbReference>
<dbReference type="PANTHER" id="PTHR47834">
    <property type="entry name" value="THIOREDOXIN-LIKE PROTEIN CITRX, CHLOROPLASTIC"/>
    <property type="match status" value="1"/>
</dbReference>
<dbReference type="PANTHER" id="PTHR47834:SF2">
    <property type="entry name" value="THIOREDOXIN-LIKE PROTEIN CITRX, CHLOROPLASTIC"/>
    <property type="match status" value="1"/>
</dbReference>
<dbReference type="Pfam" id="PF00085">
    <property type="entry name" value="Thioredoxin"/>
    <property type="match status" value="1"/>
</dbReference>
<dbReference type="PRINTS" id="PR00421">
    <property type="entry name" value="THIOREDOXIN"/>
</dbReference>
<dbReference type="SUPFAM" id="SSF52833">
    <property type="entry name" value="Thioredoxin-like"/>
    <property type="match status" value="1"/>
</dbReference>
<dbReference type="PROSITE" id="PS51352">
    <property type="entry name" value="THIOREDOXIN_2"/>
    <property type="match status" value="1"/>
</dbReference>
<gene>
    <name evidence="5" type="primary">CITRX2</name>
</gene>
<comment type="function">
    <text evidence="2">Probable thiol-disulfide oxidoreductase that may play a role in proper chloroplast development.</text>
</comment>
<comment type="interaction">
    <interactant intactId="EBI-8565921">
        <id>Q6JE37</id>
    </interactant>
    <interactant intactId="EBI-8565934">
        <id>Q84QD9</id>
        <label>ACIK1</label>
    </interactant>
    <organismsDiffer>true</organismsDiffer>
    <experiments>4</experiments>
</comment>
<comment type="subcellular location">
    <subcellularLocation>
        <location evidence="3">Plastid</location>
        <location evidence="3">Chloroplast</location>
    </subcellularLocation>
</comment>
<comment type="similarity">
    <text evidence="6">Belongs to the thioredoxin family. Plant CITRX-type subfamily.</text>
</comment>
<comment type="caution">
    <text evidence="7">The article has been retracted, because it has become clear that the thioredoxin that interacts in yeast 2-hybrid with the Cf-9 C-terminus is in fact localized in the chloroplast, rendering a role in Cf-9 signaling unlikely. All the authors agree that this paper should be withdrawn from the scientific literature.</text>
</comment>
<accession>Q6JE37</accession>
<evidence type="ECO:0000250" key="1">
    <source>
        <dbReference type="UniProtKB" id="P10599"/>
    </source>
</evidence>
<evidence type="ECO:0000250" key="2">
    <source>
        <dbReference type="UniProtKB" id="Q9M7X9"/>
    </source>
</evidence>
<evidence type="ECO:0000255" key="3"/>
<evidence type="ECO:0000255" key="4">
    <source>
        <dbReference type="PROSITE-ProRule" id="PRU00691"/>
    </source>
</evidence>
<evidence type="ECO:0000303" key="5">
    <source>
    </source>
</evidence>
<evidence type="ECO:0000305" key="6"/>
<evidence type="ECO:0000305" key="7">
    <source>
    </source>
</evidence>
<protein>
    <recommendedName>
        <fullName evidence="6">Thioredoxin-like protein CITRX2, chloroplastic</fullName>
        <ecNumber evidence="6">1.8.-.-</ecNumber>
    </recommendedName>
    <alternativeName>
        <fullName evidence="5">Cf-9-interacting thioredoxin 2</fullName>
        <shortName evidence="5">NbCiTrx2</shortName>
    </alternativeName>
</protein>